<comment type="function">
    <text evidence="1 5">Might act as an E3 ubiquitin-protein ligase, or as part of E3 complex, which accepts ubiquitin from specific E2 ubiquitin-conjugating enzymes and then transfers it to substrates.</text>
</comment>
<comment type="catalytic activity">
    <reaction evidence="2">
        <text>[E2 ubiquitin-conjugating enzyme]-S-ubiquitinyl-L-cysteine + [acceptor protein]-L-lysine = [E2 ubiquitin-conjugating enzyme]-L-cysteine + [acceptor protein]-N(6)-ubiquitinyl-L-lysine.</text>
        <dbReference type="EC" id="2.3.2.31"/>
    </reaction>
</comment>
<comment type="cofactor">
    <cofactor evidence="7">
        <name>Zn(2+)</name>
        <dbReference type="ChEBI" id="CHEBI:29105"/>
    </cofactor>
    <text evidence="7">Binds 4 Zn(2+) ions per subunit.</text>
</comment>
<comment type="pathway">
    <text>Protein modification; protein ubiquitination.</text>
</comment>
<comment type="alternative products">
    <event type="alternative splicing"/>
    <isoform>
        <id>Q949V6-1</id>
        <name>1</name>
        <sequence type="displayed"/>
    </isoform>
    <text>A number of isoforms are produced. According to EST sequences.</text>
</comment>
<comment type="tissue specificity">
    <text evidence="6">Ubiquitous.</text>
</comment>
<comment type="domain">
    <text evidence="2">Members of the RBR family are atypical E3 ligases. They interact with the E2 conjugating enzyme UBE2L3 and function like HECT-type E3 enzymes: they bind E2s via the first RING-type zinc finger, but require an obligate trans-thiolation step during the ubiquitin transfer, requiring a conserved active site Cys residue in the second RING-type zinc finger. The active site probably forms a thioester intermediate with ubiquitin taken from the active-site cysteine of the E2 before ultimately transferring it to a Lys residue on the substrate.</text>
</comment>
<comment type="similarity">
    <text evidence="7">Belongs to the RBR family. Ariadne subfamily.</text>
</comment>
<comment type="caution">
    <text evidence="7">Lacks the His residue in the RING-type domain 2 that is one of the conserved features of the family.</text>
</comment>
<comment type="sequence caution" evidence="7">
    <conflict type="erroneous gene model prediction">
        <sequence resource="EMBL-CDS" id="CAB36714"/>
    </conflict>
</comment>
<comment type="sequence caution" evidence="7">
    <conflict type="erroneous gene model prediction">
        <sequence resource="EMBL-CDS" id="CAB80154"/>
    </conflict>
</comment>
<evidence type="ECO:0000250" key="1"/>
<evidence type="ECO:0000250" key="2">
    <source>
        <dbReference type="UniProtKB" id="Q9Y4X5"/>
    </source>
</evidence>
<evidence type="ECO:0000255" key="3">
    <source>
        <dbReference type="PROSITE-ProRule" id="PRU01221"/>
    </source>
</evidence>
<evidence type="ECO:0000256" key="4">
    <source>
        <dbReference type="SAM" id="MobiDB-lite"/>
    </source>
</evidence>
<evidence type="ECO:0000269" key="5">
    <source>
    </source>
</evidence>
<evidence type="ECO:0000269" key="6">
    <source>
    </source>
</evidence>
<evidence type="ECO:0000305" key="7"/>
<dbReference type="EC" id="2.3.2.31" evidence="2"/>
<dbReference type="EMBL" id="AJ510204">
    <property type="protein sequence ID" value="CAD52883.1"/>
    <property type="molecule type" value="Genomic_DNA"/>
</dbReference>
<dbReference type="EMBL" id="AL035521">
    <property type="protein sequence ID" value="CAB36714.1"/>
    <property type="status" value="ALT_SEQ"/>
    <property type="molecule type" value="Genomic_DNA"/>
</dbReference>
<dbReference type="EMBL" id="AL161585">
    <property type="protein sequence ID" value="CAB80154.1"/>
    <property type="status" value="ALT_SEQ"/>
    <property type="molecule type" value="Genomic_DNA"/>
</dbReference>
<dbReference type="EMBL" id="CP002687">
    <property type="protein sequence ID" value="AEE86364.1"/>
    <property type="molecule type" value="Genomic_DNA"/>
</dbReference>
<dbReference type="EMBL" id="AY050864">
    <property type="protein sequence ID" value="AAK92801.1"/>
    <property type="molecule type" value="mRNA"/>
</dbReference>
<dbReference type="EMBL" id="AY117264">
    <property type="protein sequence ID" value="AAM51339.1"/>
    <property type="molecule type" value="mRNA"/>
</dbReference>
<dbReference type="PIR" id="T04783">
    <property type="entry name" value="T04783"/>
</dbReference>
<dbReference type="RefSeq" id="NP_567966.1">
    <molecule id="Q949V6-1"/>
    <property type="nucleotide sequence ID" value="NM_119602.2"/>
</dbReference>
<dbReference type="SMR" id="Q949V6"/>
<dbReference type="BioGRID" id="14869">
    <property type="interactions" value="3"/>
</dbReference>
<dbReference type="FunCoup" id="Q949V6">
    <property type="interactions" value="3974"/>
</dbReference>
<dbReference type="STRING" id="3702.Q949V6"/>
<dbReference type="iPTMnet" id="Q949V6"/>
<dbReference type="PaxDb" id="3702-AT4G34370.1"/>
<dbReference type="ProteomicsDB" id="241059">
    <molecule id="Q949V6-1"/>
</dbReference>
<dbReference type="EnsemblPlants" id="AT4G34370.1">
    <molecule id="Q949V6-1"/>
    <property type="protein sequence ID" value="AT4G34370.1"/>
    <property type="gene ID" value="AT4G34370"/>
</dbReference>
<dbReference type="GeneID" id="829587"/>
<dbReference type="Gramene" id="AT4G34370.1">
    <molecule id="Q949V6-1"/>
    <property type="protein sequence ID" value="AT4G34370.1"/>
    <property type="gene ID" value="AT4G34370"/>
</dbReference>
<dbReference type="KEGG" id="ath:AT4G34370"/>
<dbReference type="Araport" id="AT4G34370"/>
<dbReference type="TAIR" id="AT4G34370">
    <property type="gene designation" value="ARI1"/>
</dbReference>
<dbReference type="eggNOG" id="KOG1815">
    <property type="taxonomic scope" value="Eukaryota"/>
</dbReference>
<dbReference type="InParanoid" id="Q949V6"/>
<dbReference type="OMA" id="CYYSSDQ"/>
<dbReference type="PhylomeDB" id="Q949V6"/>
<dbReference type="UniPathway" id="UPA00143"/>
<dbReference type="PRO" id="PR:Q949V6"/>
<dbReference type="Proteomes" id="UP000006548">
    <property type="component" value="Chromosome 4"/>
</dbReference>
<dbReference type="ExpressionAtlas" id="Q949V6">
    <property type="expression patterns" value="baseline and differential"/>
</dbReference>
<dbReference type="GO" id="GO:0004842">
    <property type="term" value="F:ubiquitin-protein transferase activity"/>
    <property type="evidence" value="ECO:0007669"/>
    <property type="project" value="InterPro"/>
</dbReference>
<dbReference type="GO" id="GO:0008270">
    <property type="term" value="F:zinc ion binding"/>
    <property type="evidence" value="ECO:0007669"/>
    <property type="project" value="UniProtKB-KW"/>
</dbReference>
<dbReference type="GO" id="GO:0016567">
    <property type="term" value="P:protein ubiquitination"/>
    <property type="evidence" value="ECO:0007669"/>
    <property type="project" value="UniProtKB-UniPathway"/>
</dbReference>
<dbReference type="CDD" id="cd20346">
    <property type="entry name" value="BRcat_RBR_ANKIB1"/>
    <property type="match status" value="1"/>
</dbReference>
<dbReference type="CDD" id="cd22586">
    <property type="entry name" value="Rcat_RBR_ARI1-like"/>
    <property type="match status" value="1"/>
</dbReference>
<dbReference type="CDD" id="cd16773">
    <property type="entry name" value="RING-HC_RBR_TRIAD1"/>
    <property type="match status" value="1"/>
</dbReference>
<dbReference type="FunFam" id="1.20.120.1750:FF:000013">
    <property type="entry name" value="RBR-type E3 ubiquitin transferase"/>
    <property type="match status" value="1"/>
</dbReference>
<dbReference type="FunFam" id="3.30.40.10:FF:000019">
    <property type="entry name" value="RBR-type E3 ubiquitin transferase"/>
    <property type="match status" value="1"/>
</dbReference>
<dbReference type="Gene3D" id="1.20.120.1750">
    <property type="match status" value="1"/>
</dbReference>
<dbReference type="Gene3D" id="3.30.40.10">
    <property type="entry name" value="Zinc/RING finger domain, C3HC4 (zinc finger)"/>
    <property type="match status" value="1"/>
</dbReference>
<dbReference type="InterPro" id="IPR045840">
    <property type="entry name" value="Ariadne"/>
</dbReference>
<dbReference type="InterPro" id="IPR048962">
    <property type="entry name" value="ARIH1-like_UBL"/>
</dbReference>
<dbReference type="InterPro" id="IPR031127">
    <property type="entry name" value="E3_UB_ligase_RBR"/>
</dbReference>
<dbReference type="InterPro" id="IPR002867">
    <property type="entry name" value="IBR_dom"/>
</dbReference>
<dbReference type="InterPro" id="IPR044066">
    <property type="entry name" value="TRIAD_supradom"/>
</dbReference>
<dbReference type="InterPro" id="IPR001841">
    <property type="entry name" value="Znf_RING"/>
</dbReference>
<dbReference type="InterPro" id="IPR013083">
    <property type="entry name" value="Znf_RING/FYVE/PHD"/>
</dbReference>
<dbReference type="PANTHER" id="PTHR11685">
    <property type="entry name" value="RBR FAMILY RING FINGER AND IBR DOMAIN-CONTAINING"/>
    <property type="match status" value="1"/>
</dbReference>
<dbReference type="Pfam" id="PF19422">
    <property type="entry name" value="Ariadne"/>
    <property type="match status" value="1"/>
</dbReference>
<dbReference type="Pfam" id="PF01485">
    <property type="entry name" value="IBR"/>
    <property type="match status" value="1"/>
</dbReference>
<dbReference type="Pfam" id="PF21235">
    <property type="entry name" value="UBA_ARI1"/>
    <property type="match status" value="1"/>
</dbReference>
<dbReference type="SMART" id="SM00647">
    <property type="entry name" value="IBR"/>
    <property type="match status" value="2"/>
</dbReference>
<dbReference type="SUPFAM" id="SSF57850">
    <property type="entry name" value="RING/U-box"/>
    <property type="match status" value="3"/>
</dbReference>
<dbReference type="PROSITE" id="PS51873">
    <property type="entry name" value="TRIAD"/>
    <property type="match status" value="1"/>
</dbReference>
<dbReference type="PROSITE" id="PS50089">
    <property type="entry name" value="ZF_RING_2"/>
    <property type="match status" value="1"/>
</dbReference>
<sequence>MDDYFSAEEEACYYSSDQDSLDGIDNEESELQPLSSKRSNTQVITQESLLAAQREDLLRVMELLSIKEHHARTLLIHYQWDVEKLFAVFVEKGKDSLFSGAGVTVFDYQYGNSSFPQSSQMSCDVCMEDLPGDHMTRMDCGHCFCNNCWTEHFTVQINEGQSKRIRCMAHQCNAICDEDIVRSLVSKKRPDLAAKFDRYLLESYIEDNRMVKWCPSTPHCGNAIRAEDDKLCEVECSCGLQFCFSCLCQAHSPCSCLMWELWRKKCRDESETINWITVHTKLCPKCYKPVEKNGGCNLVRCICGQCFCWLCGGATGSDHTYRSIAGHSCGRYQDDKEKQMERAKRDLNRYTHYHHRYKAHTDSSKLEDKLRDTIHEKVSKSEKRELKLKDFSWVTNGLDRLFRSRRVLSYSYAFAYYMFGEEMFKDEMTPEEREIKKNLFEDQQQQLESNVEKLSQFLEEPFDEFSNDKVMAIRIQIINLSVAVDTLCKKMYECIENDLLGSLQLGIHNISPYRSKGIEQAAQFYASWNSKDADKFQPLDSGTSGVTSRPEQASGSRSSEDTICSSSQKRPKKEGSFLNNKVTLLDLNLPADFVDQN</sequence>
<proteinExistence type="evidence at transcript level"/>
<feature type="chain" id="PRO_0000356194" description="Probable E3 ubiquitin-protein ligase ARI1">
    <location>
        <begin position="1"/>
        <end position="597"/>
    </location>
</feature>
<feature type="zinc finger region" description="RING-type 1" evidence="3">
    <location>
        <begin position="123"/>
        <end position="172"/>
    </location>
</feature>
<feature type="zinc finger region" description="IBR-type" evidence="3">
    <location>
        <begin position="194"/>
        <end position="256"/>
    </location>
</feature>
<feature type="zinc finger region" description="RING-type 2; atypical" evidence="3">
    <location>
        <begin position="283"/>
        <end position="311"/>
    </location>
</feature>
<feature type="region of interest" description="TRIAD supradomain" evidence="3">
    <location>
        <begin position="119"/>
        <end position="333"/>
    </location>
</feature>
<feature type="region of interest" description="Disordered" evidence="4">
    <location>
        <begin position="536"/>
        <end position="575"/>
    </location>
</feature>
<feature type="compositionally biased region" description="Polar residues" evidence="4">
    <location>
        <begin position="540"/>
        <end position="568"/>
    </location>
</feature>
<feature type="active site" evidence="3">
    <location>
        <position position="296"/>
    </location>
</feature>
<feature type="binding site" evidence="3">
    <location>
        <position position="123"/>
    </location>
    <ligand>
        <name>Zn(2+)</name>
        <dbReference type="ChEBI" id="CHEBI:29105"/>
        <label>1</label>
    </ligand>
</feature>
<feature type="binding site" evidence="3">
    <location>
        <position position="126"/>
    </location>
    <ligand>
        <name>Zn(2+)</name>
        <dbReference type="ChEBI" id="CHEBI:29105"/>
        <label>1</label>
    </ligand>
</feature>
<feature type="binding site" evidence="3">
    <location>
        <position position="140"/>
    </location>
    <ligand>
        <name>Zn(2+)</name>
        <dbReference type="ChEBI" id="CHEBI:29105"/>
        <label>2</label>
    </ligand>
</feature>
<feature type="binding site" evidence="3">
    <location>
        <position position="142"/>
    </location>
    <ligand>
        <name>Zn(2+)</name>
        <dbReference type="ChEBI" id="CHEBI:29105"/>
        <label>2</label>
    </ligand>
</feature>
<feature type="binding site" evidence="3">
    <location>
        <position position="145"/>
    </location>
    <ligand>
        <name>Zn(2+)</name>
        <dbReference type="ChEBI" id="CHEBI:29105"/>
        <label>1</label>
    </ligand>
</feature>
<feature type="binding site" evidence="3">
    <location>
        <position position="148"/>
    </location>
    <ligand>
        <name>Zn(2+)</name>
        <dbReference type="ChEBI" id="CHEBI:29105"/>
        <label>1</label>
    </ligand>
</feature>
<feature type="binding site" evidence="3">
    <location>
        <position position="167"/>
    </location>
    <ligand>
        <name>Zn(2+)</name>
        <dbReference type="ChEBI" id="CHEBI:29105"/>
        <label>2</label>
    </ligand>
</feature>
<feature type="binding site" evidence="3">
    <location>
        <position position="172"/>
    </location>
    <ligand>
        <name>Zn(2+)</name>
        <dbReference type="ChEBI" id="CHEBI:29105"/>
        <label>2</label>
    </ligand>
</feature>
<feature type="binding site" evidence="3">
    <location>
        <position position="214"/>
    </location>
    <ligand>
        <name>Zn(2+)</name>
        <dbReference type="ChEBI" id="CHEBI:29105"/>
        <label>3</label>
    </ligand>
</feature>
<feature type="binding site" evidence="3">
    <location>
        <position position="220"/>
    </location>
    <ligand>
        <name>Zn(2+)</name>
        <dbReference type="ChEBI" id="CHEBI:29105"/>
        <label>3</label>
    </ligand>
</feature>
<feature type="binding site" evidence="3">
    <location>
        <position position="236"/>
    </location>
    <ligand>
        <name>Zn(2+)</name>
        <dbReference type="ChEBI" id="CHEBI:29105"/>
        <label>3</label>
    </ligand>
</feature>
<feature type="binding site" evidence="3">
    <location>
        <position position="238"/>
    </location>
    <ligand>
        <name>Zn(2+)</name>
        <dbReference type="ChEBI" id="CHEBI:29105"/>
        <label>3</label>
    </ligand>
</feature>
<feature type="binding site" evidence="3">
    <location>
        <position position="243"/>
    </location>
    <ligand>
        <name>Zn(2+)</name>
        <dbReference type="ChEBI" id="CHEBI:29105"/>
        <label>4</label>
    </ligand>
</feature>
<feature type="binding site" evidence="3">
    <location>
        <position position="246"/>
    </location>
    <ligand>
        <name>Zn(2+)</name>
        <dbReference type="ChEBI" id="CHEBI:29105"/>
        <label>4</label>
    </ligand>
</feature>
<feature type="binding site" evidence="3">
    <location>
        <position position="251"/>
    </location>
    <ligand>
        <name>Zn(2+)</name>
        <dbReference type="ChEBI" id="CHEBI:29105"/>
        <label>4</label>
    </ligand>
</feature>
<feature type="binding site" evidence="3">
    <location>
        <position position="256"/>
    </location>
    <ligand>
        <name>Zn(2+)</name>
        <dbReference type="ChEBI" id="CHEBI:29105"/>
        <label>4</label>
    </ligand>
</feature>
<feature type="binding site" evidence="3">
    <location>
        <position position="283"/>
    </location>
    <ligand>
        <name>Zn(2+)</name>
        <dbReference type="ChEBI" id="CHEBI:29105"/>
        <label>5</label>
    </ligand>
</feature>
<feature type="binding site" evidence="3">
    <location>
        <position position="286"/>
    </location>
    <ligand>
        <name>Zn(2+)</name>
        <dbReference type="ChEBI" id="CHEBI:29105"/>
        <label>5</label>
    </ligand>
</feature>
<feature type="binding site" evidence="3">
    <location>
        <position position="301"/>
    </location>
    <ligand>
        <name>Zn(2+)</name>
        <dbReference type="ChEBI" id="CHEBI:29105"/>
        <label>5</label>
    </ligand>
</feature>
<feature type="binding site" evidence="3">
    <location>
        <position position="303"/>
    </location>
    <ligand>
        <name>Zn(2+)</name>
        <dbReference type="ChEBI" id="CHEBI:29105"/>
        <label>5</label>
    </ligand>
</feature>
<feature type="binding site" evidence="3">
    <location>
        <position position="308"/>
    </location>
    <ligand>
        <name>Zn(2+)</name>
        <dbReference type="ChEBI" id="CHEBI:29105"/>
        <label>6</label>
    </ligand>
</feature>
<feature type="binding site" evidence="3">
    <location>
        <position position="311"/>
    </location>
    <ligand>
        <name>Zn(2+)</name>
        <dbReference type="ChEBI" id="CHEBI:29105"/>
        <label>6</label>
    </ligand>
</feature>
<feature type="binding site" evidence="3">
    <location>
        <position position="319"/>
    </location>
    <ligand>
        <name>Zn(2+)</name>
        <dbReference type="ChEBI" id="CHEBI:29105"/>
        <label>6</label>
    </ligand>
</feature>
<feature type="binding site" evidence="3">
    <location>
        <position position="329"/>
    </location>
    <ligand>
        <name>Zn(2+)</name>
        <dbReference type="ChEBI" id="CHEBI:29105"/>
        <label>6</label>
    </ligand>
</feature>
<accession>Q949V6</accession>
<accession>Q9SZ02</accession>
<organism>
    <name type="scientific">Arabidopsis thaliana</name>
    <name type="common">Mouse-ear cress</name>
    <dbReference type="NCBI Taxonomy" id="3702"/>
    <lineage>
        <taxon>Eukaryota</taxon>
        <taxon>Viridiplantae</taxon>
        <taxon>Streptophyta</taxon>
        <taxon>Embryophyta</taxon>
        <taxon>Tracheophyta</taxon>
        <taxon>Spermatophyta</taxon>
        <taxon>Magnoliopsida</taxon>
        <taxon>eudicotyledons</taxon>
        <taxon>Gunneridae</taxon>
        <taxon>Pentapetalae</taxon>
        <taxon>rosids</taxon>
        <taxon>malvids</taxon>
        <taxon>Brassicales</taxon>
        <taxon>Brassicaceae</taxon>
        <taxon>Camelineae</taxon>
        <taxon>Arabidopsis</taxon>
    </lineage>
</organism>
<name>ARI1_ARATH</name>
<keyword id="KW-0025">Alternative splicing</keyword>
<keyword id="KW-0479">Metal-binding</keyword>
<keyword id="KW-1185">Reference proteome</keyword>
<keyword id="KW-0677">Repeat</keyword>
<keyword id="KW-0808">Transferase</keyword>
<keyword id="KW-0833">Ubl conjugation pathway</keyword>
<keyword id="KW-0862">Zinc</keyword>
<keyword id="KW-0863">Zinc-finger</keyword>
<reference key="1">
    <citation type="journal article" date="2003" name="Plant Physiol.">
        <title>Identification and characterization of the ARIADNE gene family in Arabidopsis. A group of putative E3 ligases.</title>
        <authorList>
            <person name="Mladek C."/>
            <person name="Guger K."/>
            <person name="Hauser M.-T."/>
        </authorList>
    </citation>
    <scope>NUCLEOTIDE SEQUENCE [GENOMIC DNA]</scope>
    <scope>TISSUE SPECIFICITY</scope>
    <scope>NOMENCLATURE</scope>
    <scope>GENE FAMILY</scope>
    <source>
        <strain>cv. Columbia</strain>
    </source>
</reference>
<reference key="2">
    <citation type="journal article" date="1999" name="Nature">
        <title>Sequence and analysis of chromosome 4 of the plant Arabidopsis thaliana.</title>
        <authorList>
            <person name="Mayer K.F.X."/>
            <person name="Schueller C."/>
            <person name="Wambutt R."/>
            <person name="Murphy G."/>
            <person name="Volckaert G."/>
            <person name="Pohl T."/>
            <person name="Duesterhoeft A."/>
            <person name="Stiekema W."/>
            <person name="Entian K.-D."/>
            <person name="Terryn N."/>
            <person name="Harris B."/>
            <person name="Ansorge W."/>
            <person name="Brandt P."/>
            <person name="Grivell L.A."/>
            <person name="Rieger M."/>
            <person name="Weichselgartner M."/>
            <person name="de Simone V."/>
            <person name="Obermaier B."/>
            <person name="Mache R."/>
            <person name="Mueller M."/>
            <person name="Kreis M."/>
            <person name="Delseny M."/>
            <person name="Puigdomenech P."/>
            <person name="Watson M."/>
            <person name="Schmidtheini T."/>
            <person name="Reichert B."/>
            <person name="Portetelle D."/>
            <person name="Perez-Alonso M."/>
            <person name="Boutry M."/>
            <person name="Bancroft I."/>
            <person name="Vos P."/>
            <person name="Hoheisel J."/>
            <person name="Zimmermann W."/>
            <person name="Wedler H."/>
            <person name="Ridley P."/>
            <person name="Langham S.-A."/>
            <person name="McCullagh B."/>
            <person name="Bilham L."/>
            <person name="Robben J."/>
            <person name="van der Schueren J."/>
            <person name="Grymonprez B."/>
            <person name="Chuang Y.-J."/>
            <person name="Vandenbussche F."/>
            <person name="Braeken M."/>
            <person name="Weltjens I."/>
            <person name="Voet M."/>
            <person name="Bastiaens I."/>
            <person name="Aert R."/>
            <person name="Defoor E."/>
            <person name="Weitzenegger T."/>
            <person name="Bothe G."/>
            <person name="Ramsperger U."/>
            <person name="Hilbert H."/>
            <person name="Braun M."/>
            <person name="Holzer E."/>
            <person name="Brandt A."/>
            <person name="Peters S."/>
            <person name="van Staveren M."/>
            <person name="Dirkse W."/>
            <person name="Mooijman P."/>
            <person name="Klein Lankhorst R."/>
            <person name="Rose M."/>
            <person name="Hauf J."/>
            <person name="Koetter P."/>
            <person name="Berneiser S."/>
            <person name="Hempel S."/>
            <person name="Feldpausch M."/>
            <person name="Lamberth S."/>
            <person name="Van den Daele H."/>
            <person name="De Keyser A."/>
            <person name="Buysshaert C."/>
            <person name="Gielen J."/>
            <person name="Villarroel R."/>
            <person name="De Clercq R."/>
            <person name="van Montagu M."/>
            <person name="Rogers J."/>
            <person name="Cronin A."/>
            <person name="Quail M.A."/>
            <person name="Bray-Allen S."/>
            <person name="Clark L."/>
            <person name="Doggett J."/>
            <person name="Hall S."/>
            <person name="Kay M."/>
            <person name="Lennard N."/>
            <person name="McLay K."/>
            <person name="Mayes R."/>
            <person name="Pettett A."/>
            <person name="Rajandream M.A."/>
            <person name="Lyne M."/>
            <person name="Benes V."/>
            <person name="Rechmann S."/>
            <person name="Borkova D."/>
            <person name="Bloecker H."/>
            <person name="Scharfe M."/>
            <person name="Grimm M."/>
            <person name="Loehnert T.-H."/>
            <person name="Dose S."/>
            <person name="de Haan M."/>
            <person name="Maarse A.C."/>
            <person name="Schaefer M."/>
            <person name="Mueller-Auer S."/>
            <person name="Gabel C."/>
            <person name="Fuchs M."/>
            <person name="Fartmann B."/>
            <person name="Granderath K."/>
            <person name="Dauner D."/>
            <person name="Herzl A."/>
            <person name="Neumann S."/>
            <person name="Argiriou A."/>
            <person name="Vitale D."/>
            <person name="Liguori R."/>
            <person name="Piravandi E."/>
            <person name="Massenet O."/>
            <person name="Quigley F."/>
            <person name="Clabauld G."/>
            <person name="Muendlein A."/>
            <person name="Felber R."/>
            <person name="Schnabl S."/>
            <person name="Hiller R."/>
            <person name="Schmidt W."/>
            <person name="Lecharny A."/>
            <person name="Aubourg S."/>
            <person name="Chefdor F."/>
            <person name="Cooke R."/>
            <person name="Berger C."/>
            <person name="Monfort A."/>
            <person name="Casacuberta E."/>
            <person name="Gibbons T."/>
            <person name="Weber N."/>
            <person name="Vandenbol M."/>
            <person name="Bargues M."/>
            <person name="Terol J."/>
            <person name="Torres A."/>
            <person name="Perez-Perez A."/>
            <person name="Purnelle B."/>
            <person name="Bent E."/>
            <person name="Johnson S."/>
            <person name="Tacon D."/>
            <person name="Jesse T."/>
            <person name="Heijnen L."/>
            <person name="Schwarz S."/>
            <person name="Scholler P."/>
            <person name="Heber S."/>
            <person name="Francs P."/>
            <person name="Bielke C."/>
            <person name="Frishman D."/>
            <person name="Haase D."/>
            <person name="Lemcke K."/>
            <person name="Mewes H.-W."/>
            <person name="Stocker S."/>
            <person name="Zaccaria P."/>
            <person name="Bevan M."/>
            <person name="Wilson R.K."/>
            <person name="de la Bastide M."/>
            <person name="Habermann K."/>
            <person name="Parnell L."/>
            <person name="Dedhia N."/>
            <person name="Gnoj L."/>
            <person name="Schutz K."/>
            <person name="Huang E."/>
            <person name="Spiegel L."/>
            <person name="Sekhon M."/>
            <person name="Murray J."/>
            <person name="Sheet P."/>
            <person name="Cordes M."/>
            <person name="Abu-Threideh J."/>
            <person name="Stoneking T."/>
            <person name="Kalicki J."/>
            <person name="Graves T."/>
            <person name="Harmon G."/>
            <person name="Edwards J."/>
            <person name="Latreille P."/>
            <person name="Courtney L."/>
            <person name="Cloud J."/>
            <person name="Abbott A."/>
            <person name="Scott K."/>
            <person name="Johnson D."/>
            <person name="Minx P."/>
            <person name="Bentley D."/>
            <person name="Fulton B."/>
            <person name="Miller N."/>
            <person name="Greco T."/>
            <person name="Kemp K."/>
            <person name="Kramer J."/>
            <person name="Fulton L."/>
            <person name="Mardis E."/>
            <person name="Dante M."/>
            <person name="Pepin K."/>
            <person name="Hillier L.W."/>
            <person name="Nelson J."/>
            <person name="Spieth J."/>
            <person name="Ryan E."/>
            <person name="Andrews S."/>
            <person name="Geisel C."/>
            <person name="Layman D."/>
            <person name="Du H."/>
            <person name="Ali J."/>
            <person name="Berghoff A."/>
            <person name="Jones K."/>
            <person name="Drone K."/>
            <person name="Cotton M."/>
            <person name="Joshu C."/>
            <person name="Antonoiu B."/>
            <person name="Zidanic M."/>
            <person name="Strong C."/>
            <person name="Sun H."/>
            <person name="Lamar B."/>
            <person name="Yordan C."/>
            <person name="Ma P."/>
            <person name="Zhong J."/>
            <person name="Preston R."/>
            <person name="Vil D."/>
            <person name="Shekher M."/>
            <person name="Matero A."/>
            <person name="Shah R."/>
            <person name="Swaby I.K."/>
            <person name="O'Shaughnessy A."/>
            <person name="Rodriguez M."/>
            <person name="Hoffman J."/>
            <person name="Till S."/>
            <person name="Granat S."/>
            <person name="Shohdy N."/>
            <person name="Hasegawa A."/>
            <person name="Hameed A."/>
            <person name="Lodhi M."/>
            <person name="Johnson A."/>
            <person name="Chen E."/>
            <person name="Marra M.A."/>
            <person name="Martienssen R."/>
            <person name="McCombie W.R."/>
        </authorList>
    </citation>
    <scope>NUCLEOTIDE SEQUENCE [LARGE SCALE GENOMIC DNA]</scope>
    <source>
        <strain>cv. Columbia</strain>
    </source>
</reference>
<reference key="3">
    <citation type="journal article" date="2017" name="Plant J.">
        <title>Araport11: a complete reannotation of the Arabidopsis thaliana reference genome.</title>
        <authorList>
            <person name="Cheng C.Y."/>
            <person name="Krishnakumar V."/>
            <person name="Chan A.P."/>
            <person name="Thibaud-Nissen F."/>
            <person name="Schobel S."/>
            <person name="Town C.D."/>
        </authorList>
    </citation>
    <scope>GENOME REANNOTATION</scope>
    <source>
        <strain>cv. Columbia</strain>
    </source>
</reference>
<reference key="4">
    <citation type="journal article" date="2003" name="Science">
        <title>Empirical analysis of transcriptional activity in the Arabidopsis genome.</title>
        <authorList>
            <person name="Yamada K."/>
            <person name="Lim J."/>
            <person name="Dale J.M."/>
            <person name="Chen H."/>
            <person name="Shinn P."/>
            <person name="Palm C.J."/>
            <person name="Southwick A.M."/>
            <person name="Wu H.C."/>
            <person name="Kim C.J."/>
            <person name="Nguyen M."/>
            <person name="Pham P.K."/>
            <person name="Cheuk R.F."/>
            <person name="Karlin-Newmann G."/>
            <person name="Liu S.X."/>
            <person name="Lam B."/>
            <person name="Sakano H."/>
            <person name="Wu T."/>
            <person name="Yu G."/>
            <person name="Miranda M."/>
            <person name="Quach H.L."/>
            <person name="Tripp M."/>
            <person name="Chang C.H."/>
            <person name="Lee J.M."/>
            <person name="Toriumi M.J."/>
            <person name="Chan M.M."/>
            <person name="Tang C.C."/>
            <person name="Onodera C.S."/>
            <person name="Deng J.M."/>
            <person name="Akiyama K."/>
            <person name="Ansari Y."/>
            <person name="Arakawa T."/>
            <person name="Banh J."/>
            <person name="Banno F."/>
            <person name="Bowser L."/>
            <person name="Brooks S.Y."/>
            <person name="Carninci P."/>
            <person name="Chao Q."/>
            <person name="Choy N."/>
            <person name="Enju A."/>
            <person name="Goldsmith A.D."/>
            <person name="Gurjal M."/>
            <person name="Hansen N.F."/>
            <person name="Hayashizaki Y."/>
            <person name="Johnson-Hopson C."/>
            <person name="Hsuan V.W."/>
            <person name="Iida K."/>
            <person name="Karnes M."/>
            <person name="Khan S."/>
            <person name="Koesema E."/>
            <person name="Ishida J."/>
            <person name="Jiang P.X."/>
            <person name="Jones T."/>
            <person name="Kawai J."/>
            <person name="Kamiya A."/>
            <person name="Meyers C."/>
            <person name="Nakajima M."/>
            <person name="Narusaka M."/>
            <person name="Seki M."/>
            <person name="Sakurai T."/>
            <person name="Satou M."/>
            <person name="Tamse R."/>
            <person name="Vaysberg M."/>
            <person name="Wallender E.K."/>
            <person name="Wong C."/>
            <person name="Yamamura Y."/>
            <person name="Yuan S."/>
            <person name="Shinozaki K."/>
            <person name="Davis R.W."/>
            <person name="Theologis A."/>
            <person name="Ecker J.R."/>
        </authorList>
    </citation>
    <scope>NUCLEOTIDE SEQUENCE [LARGE SCALE MRNA]</scope>
    <source>
        <strain>cv. Columbia</strain>
    </source>
</reference>
<reference key="5">
    <citation type="journal article" date="2002" name="Mol. Biol. Evol.">
        <title>Comparative genomics of the RBR family, including the Parkinson's disease-related gene parkin and the genes of the ariadne subfamily.</title>
        <authorList>
            <person name="Marin I."/>
            <person name="Ferrus A."/>
        </authorList>
    </citation>
    <scope>FUNCTION</scope>
</reference>
<protein>
    <recommendedName>
        <fullName>Probable E3 ubiquitin-protein ligase ARI1</fullName>
        <ecNumber evidence="2">2.3.2.31</ecNumber>
    </recommendedName>
    <alternativeName>
        <fullName>ARIADNE-like protein ARI1</fullName>
    </alternativeName>
    <alternativeName>
        <fullName>Protein ariadne homolog 1</fullName>
    </alternativeName>
    <alternativeName>
        <fullName evidence="7">RING-type E3 ubiquitin transferase ARI1</fullName>
    </alternativeName>
</protein>
<gene>
    <name type="primary">ARI1</name>
    <name type="ordered locus">At4g34370</name>
    <name type="ORF">F10M10.140</name>
</gene>